<gene>
    <name evidence="1" type="primary">psaI</name>
    <name type="ordered locus">CsCp050</name>
</gene>
<feature type="chain" id="PRO_0000276017" description="Photosystem I reaction center subunit VIII">
    <location>
        <begin position="1"/>
        <end position="37"/>
    </location>
</feature>
<feature type="transmembrane region" description="Helical" evidence="1">
    <location>
        <begin position="9"/>
        <end position="29"/>
    </location>
</feature>
<geneLocation type="chloroplast"/>
<sequence>MTTLTTLPSIFVPLVGLVFPAIAMASLFLHVQKNKIF</sequence>
<protein>
    <recommendedName>
        <fullName evidence="1">Photosystem I reaction center subunit VIII</fullName>
        <shortName evidence="1">PSI-I</shortName>
    </recommendedName>
</protein>
<proteinExistence type="inferred from homology"/>
<organism>
    <name type="scientific">Cucumis sativus</name>
    <name type="common">Cucumber</name>
    <dbReference type="NCBI Taxonomy" id="3659"/>
    <lineage>
        <taxon>Eukaryota</taxon>
        <taxon>Viridiplantae</taxon>
        <taxon>Streptophyta</taxon>
        <taxon>Embryophyta</taxon>
        <taxon>Tracheophyta</taxon>
        <taxon>Spermatophyta</taxon>
        <taxon>Magnoliopsida</taxon>
        <taxon>eudicotyledons</taxon>
        <taxon>Gunneridae</taxon>
        <taxon>Pentapetalae</taxon>
        <taxon>rosids</taxon>
        <taxon>fabids</taxon>
        <taxon>Cucurbitales</taxon>
        <taxon>Cucurbitaceae</taxon>
        <taxon>Benincaseae</taxon>
        <taxon>Cucumis</taxon>
    </lineage>
</organism>
<keyword id="KW-0150">Chloroplast</keyword>
<keyword id="KW-0472">Membrane</keyword>
<keyword id="KW-0602">Photosynthesis</keyword>
<keyword id="KW-0603">Photosystem I</keyword>
<keyword id="KW-0934">Plastid</keyword>
<keyword id="KW-0793">Thylakoid</keyword>
<keyword id="KW-0812">Transmembrane</keyword>
<keyword id="KW-1133">Transmembrane helix</keyword>
<accession>Q4VZI2</accession>
<accession>A5J1U4</accession>
<reference key="1">
    <citation type="journal article" date="2006" name="Plant Cell Rep.">
        <title>Complete sequence and organization of the cucumber (Cucumis sativus L. cv. Baekmibaekdadagi) chloroplast genome.</title>
        <authorList>
            <person name="Kim J.-S."/>
            <person name="Jung J.D."/>
            <person name="Lee J.-A."/>
            <person name="Park H.-W."/>
            <person name="Oh K.-H."/>
            <person name="Jeong W.J."/>
            <person name="Choi D.-W."/>
            <person name="Liu J.R."/>
            <person name="Cho K.Y."/>
        </authorList>
    </citation>
    <scope>NUCLEOTIDE SEQUENCE [LARGE SCALE GENOMIC DNA]</scope>
    <source>
        <strain>cv. Baekmibaekdadagi</strain>
    </source>
</reference>
<reference key="2">
    <citation type="journal article" date="2007" name="Cell. Mol. Biol. Lett.">
        <title>The complete structure of the cucumber (Cucumis sativus L.) chloroplast genome: its composition and comparative analysis.</title>
        <authorList>
            <person name="Plader W.W."/>
            <person name="Yukawa Y."/>
            <person name="Sugiura M."/>
            <person name="Malepszy S."/>
        </authorList>
    </citation>
    <scope>NUCLEOTIDE SEQUENCE [LARGE SCALE GENOMIC DNA]</scope>
    <source>
        <strain>cv. Borszczagowski</strain>
    </source>
</reference>
<reference key="3">
    <citation type="journal article" date="2007" name="Genome">
        <title>Sequencing cucumber (Cucumis sativus L.) chloroplast genomes identifies differences between chilling-tolerant and -susceptible cucumber lines.</title>
        <authorList>
            <person name="Chung S.-M."/>
            <person name="Gordon V.S."/>
            <person name="Staub J.E."/>
        </authorList>
    </citation>
    <scope>NUCLEOTIDE SEQUENCE [LARGE SCALE GENOMIC DNA]</scope>
    <source>
        <strain>cv. Chipper</strain>
        <strain>cv. Gy14</strain>
    </source>
</reference>
<evidence type="ECO:0000255" key="1">
    <source>
        <dbReference type="HAMAP-Rule" id="MF_00431"/>
    </source>
</evidence>
<name>PSAI_CUCSA</name>
<comment type="function">
    <text evidence="1">May help in the organization of the PsaL subunit.</text>
</comment>
<comment type="subcellular location">
    <subcellularLocation>
        <location evidence="1">Plastid</location>
        <location evidence="1">Chloroplast thylakoid membrane</location>
        <topology evidence="1">Single-pass membrane protein</topology>
    </subcellularLocation>
</comment>
<comment type="similarity">
    <text evidence="1">Belongs to the PsaI family.</text>
</comment>
<dbReference type="EMBL" id="DQ119058">
    <property type="protein sequence ID" value="AAZ94661.1"/>
    <property type="molecule type" value="Genomic_DNA"/>
</dbReference>
<dbReference type="EMBL" id="AJ970307">
    <property type="protein sequence ID" value="CAJ00768.1"/>
    <property type="molecule type" value="Genomic_DNA"/>
</dbReference>
<dbReference type="EMBL" id="DQ865975">
    <property type="protein sequence ID" value="ABI97427.1"/>
    <property type="molecule type" value="Genomic_DNA"/>
</dbReference>
<dbReference type="EMBL" id="DQ865976">
    <property type="protein sequence ID" value="ABI98755.1"/>
    <property type="molecule type" value="Genomic_DNA"/>
</dbReference>
<dbReference type="RefSeq" id="YP_247609.1">
    <property type="nucleotide sequence ID" value="NC_007144.1"/>
</dbReference>
<dbReference type="SMR" id="Q4VZI2"/>
<dbReference type="GeneID" id="3429273"/>
<dbReference type="KEGG" id="csv:3429273"/>
<dbReference type="OrthoDB" id="970998at2759"/>
<dbReference type="GO" id="GO:0009535">
    <property type="term" value="C:chloroplast thylakoid membrane"/>
    <property type="evidence" value="ECO:0007669"/>
    <property type="project" value="UniProtKB-SubCell"/>
</dbReference>
<dbReference type="GO" id="GO:0009522">
    <property type="term" value="C:photosystem I"/>
    <property type="evidence" value="ECO:0007669"/>
    <property type="project" value="UniProtKB-KW"/>
</dbReference>
<dbReference type="GO" id="GO:0015979">
    <property type="term" value="P:photosynthesis"/>
    <property type="evidence" value="ECO:0007669"/>
    <property type="project" value="UniProtKB-UniRule"/>
</dbReference>
<dbReference type="HAMAP" id="MF_00431">
    <property type="entry name" value="PSI_PsaI"/>
    <property type="match status" value="1"/>
</dbReference>
<dbReference type="InterPro" id="IPR001302">
    <property type="entry name" value="PSI_PsaI"/>
</dbReference>
<dbReference type="InterPro" id="IPR036357">
    <property type="entry name" value="PSI_PsaI_sf"/>
</dbReference>
<dbReference type="NCBIfam" id="TIGR03052">
    <property type="entry name" value="PS_I_psaI"/>
    <property type="match status" value="1"/>
</dbReference>
<dbReference type="PANTHER" id="PTHR35775">
    <property type="match status" value="1"/>
</dbReference>
<dbReference type="PANTHER" id="PTHR35775:SF2">
    <property type="entry name" value="PHOTOSYSTEM I REACTION CENTER SUBUNIT VIII"/>
    <property type="match status" value="1"/>
</dbReference>
<dbReference type="Pfam" id="PF00796">
    <property type="entry name" value="PSI_8"/>
    <property type="match status" value="1"/>
</dbReference>
<dbReference type="SUPFAM" id="SSF81540">
    <property type="entry name" value="Subunit VIII of photosystem I reaction centre, PsaI"/>
    <property type="match status" value="1"/>
</dbReference>